<dbReference type="EMBL" id="CP000868">
    <property type="protein sequence ID" value="ABX16838.1"/>
    <property type="molecule type" value="Genomic_DNA"/>
</dbReference>
<dbReference type="EMBL" id="AP009385">
    <property type="protein sequence ID" value="BAG42054.1"/>
    <property type="molecule type" value="Genomic_DNA"/>
</dbReference>
<dbReference type="RefSeq" id="WP_012214385.1">
    <property type="nucleotide sequence ID" value="NC_010084.1"/>
</dbReference>
<dbReference type="SMR" id="A9ACA0"/>
<dbReference type="STRING" id="395019.BMULJ_00074"/>
<dbReference type="KEGG" id="bmj:BMULJ_00074"/>
<dbReference type="KEGG" id="bmu:Bmul_3154"/>
<dbReference type="eggNOG" id="COG0706">
    <property type="taxonomic scope" value="Bacteria"/>
</dbReference>
<dbReference type="HOGENOM" id="CLU_016535_3_0_4"/>
<dbReference type="Proteomes" id="UP000008815">
    <property type="component" value="Chromosome 1"/>
</dbReference>
<dbReference type="GO" id="GO:0005886">
    <property type="term" value="C:plasma membrane"/>
    <property type="evidence" value="ECO:0007669"/>
    <property type="project" value="UniProtKB-SubCell"/>
</dbReference>
<dbReference type="GO" id="GO:0032977">
    <property type="term" value="F:membrane insertase activity"/>
    <property type="evidence" value="ECO:0007669"/>
    <property type="project" value="InterPro"/>
</dbReference>
<dbReference type="GO" id="GO:0051205">
    <property type="term" value="P:protein insertion into membrane"/>
    <property type="evidence" value="ECO:0007669"/>
    <property type="project" value="TreeGrafter"/>
</dbReference>
<dbReference type="GO" id="GO:0015031">
    <property type="term" value="P:protein transport"/>
    <property type="evidence" value="ECO:0007669"/>
    <property type="project" value="UniProtKB-KW"/>
</dbReference>
<dbReference type="CDD" id="cd20070">
    <property type="entry name" value="5TM_YidC_Alb3"/>
    <property type="match status" value="1"/>
</dbReference>
<dbReference type="CDD" id="cd19961">
    <property type="entry name" value="EcYidC-like_peri"/>
    <property type="match status" value="1"/>
</dbReference>
<dbReference type="Gene3D" id="2.70.98.90">
    <property type="match status" value="1"/>
</dbReference>
<dbReference type="HAMAP" id="MF_01810">
    <property type="entry name" value="YidC_type1"/>
    <property type="match status" value="1"/>
</dbReference>
<dbReference type="InterPro" id="IPR019998">
    <property type="entry name" value="Membr_insert_YidC"/>
</dbReference>
<dbReference type="InterPro" id="IPR028053">
    <property type="entry name" value="Membr_insert_YidC_N"/>
</dbReference>
<dbReference type="InterPro" id="IPR001708">
    <property type="entry name" value="YidC/ALB3/OXA1/COX18"/>
</dbReference>
<dbReference type="InterPro" id="IPR028055">
    <property type="entry name" value="YidC/Oxa/ALB_C"/>
</dbReference>
<dbReference type="InterPro" id="IPR047196">
    <property type="entry name" value="YidC_ALB_C"/>
</dbReference>
<dbReference type="InterPro" id="IPR038221">
    <property type="entry name" value="YidC_periplasmic_sf"/>
</dbReference>
<dbReference type="NCBIfam" id="NF002352">
    <property type="entry name" value="PRK01318.1-3"/>
    <property type="match status" value="1"/>
</dbReference>
<dbReference type="NCBIfam" id="NF002353">
    <property type="entry name" value="PRK01318.1-4"/>
    <property type="match status" value="1"/>
</dbReference>
<dbReference type="NCBIfam" id="TIGR03593">
    <property type="entry name" value="yidC_nterm"/>
    <property type="match status" value="1"/>
</dbReference>
<dbReference type="NCBIfam" id="TIGR03592">
    <property type="entry name" value="yidC_oxa1_cterm"/>
    <property type="match status" value="1"/>
</dbReference>
<dbReference type="PANTHER" id="PTHR12428:SF65">
    <property type="entry name" value="CYTOCHROME C OXIDASE ASSEMBLY PROTEIN COX18, MITOCHONDRIAL"/>
    <property type="match status" value="1"/>
</dbReference>
<dbReference type="PANTHER" id="PTHR12428">
    <property type="entry name" value="OXA1"/>
    <property type="match status" value="1"/>
</dbReference>
<dbReference type="Pfam" id="PF02096">
    <property type="entry name" value="60KD_IMP"/>
    <property type="match status" value="1"/>
</dbReference>
<dbReference type="Pfam" id="PF14849">
    <property type="entry name" value="YidC_periplas"/>
    <property type="match status" value="1"/>
</dbReference>
<dbReference type="PRINTS" id="PR00701">
    <property type="entry name" value="60KDINNERMP"/>
</dbReference>
<dbReference type="PRINTS" id="PR01900">
    <property type="entry name" value="YIDCPROTEIN"/>
</dbReference>
<feature type="chain" id="PRO_1000187642" description="Membrane protein insertase YidC">
    <location>
        <begin position="1"/>
        <end position="553"/>
    </location>
</feature>
<feature type="transmembrane region" description="Helical" evidence="1">
    <location>
        <begin position="7"/>
        <end position="24"/>
    </location>
</feature>
<feature type="transmembrane region" description="Helical" evidence="1">
    <location>
        <begin position="365"/>
        <end position="385"/>
    </location>
</feature>
<feature type="transmembrane region" description="Helical" evidence="1">
    <location>
        <begin position="435"/>
        <end position="455"/>
    </location>
</feature>
<feature type="transmembrane region" description="Helical" evidence="1">
    <location>
        <begin position="474"/>
        <end position="494"/>
    </location>
</feature>
<feature type="transmembrane region" description="Helical" evidence="1">
    <location>
        <begin position="509"/>
        <end position="529"/>
    </location>
</feature>
<gene>
    <name evidence="1" type="primary">yidC</name>
    <name type="ordered locus">Bmul_3154</name>
    <name type="ordered locus">BMULJ_00074</name>
</gene>
<organism>
    <name type="scientific">Burkholderia multivorans (strain ATCC 17616 / 249)</name>
    <dbReference type="NCBI Taxonomy" id="395019"/>
    <lineage>
        <taxon>Bacteria</taxon>
        <taxon>Pseudomonadati</taxon>
        <taxon>Pseudomonadota</taxon>
        <taxon>Betaproteobacteria</taxon>
        <taxon>Burkholderiales</taxon>
        <taxon>Burkholderiaceae</taxon>
        <taxon>Burkholderia</taxon>
        <taxon>Burkholderia cepacia complex</taxon>
    </lineage>
</organism>
<name>YIDC_BURM1</name>
<accession>A9ACA0</accession>
<comment type="function">
    <text evidence="1">Required for the insertion and/or proper folding and/or complex formation of integral membrane proteins into the membrane. Involved in integration of membrane proteins that insert both dependently and independently of the Sec translocase complex, as well as at least some lipoproteins. Aids folding of multispanning membrane proteins.</text>
</comment>
<comment type="subunit">
    <text evidence="1">Interacts with the Sec translocase complex via SecD. Specifically interacts with transmembrane segments of nascent integral membrane proteins during membrane integration.</text>
</comment>
<comment type="subcellular location">
    <subcellularLocation>
        <location evidence="1">Cell inner membrane</location>
        <topology evidence="1">Multi-pass membrane protein</topology>
    </subcellularLocation>
</comment>
<comment type="similarity">
    <text evidence="1">Belongs to the OXA1/ALB3/YidC family. Type 1 subfamily.</text>
</comment>
<reference key="1">
    <citation type="submission" date="2007-10" db="EMBL/GenBank/DDBJ databases">
        <title>Complete sequence of chromosome 1 of Burkholderia multivorans ATCC 17616.</title>
        <authorList>
            <person name="Copeland A."/>
            <person name="Lucas S."/>
            <person name="Lapidus A."/>
            <person name="Barry K."/>
            <person name="Glavina del Rio T."/>
            <person name="Dalin E."/>
            <person name="Tice H."/>
            <person name="Pitluck S."/>
            <person name="Chain P."/>
            <person name="Malfatti S."/>
            <person name="Shin M."/>
            <person name="Vergez L."/>
            <person name="Schmutz J."/>
            <person name="Larimer F."/>
            <person name="Land M."/>
            <person name="Hauser L."/>
            <person name="Kyrpides N."/>
            <person name="Kim E."/>
            <person name="Tiedje J."/>
            <person name="Richardson P."/>
        </authorList>
    </citation>
    <scope>NUCLEOTIDE SEQUENCE [LARGE SCALE GENOMIC DNA]</scope>
    <source>
        <strain>ATCC 17616 / 249</strain>
    </source>
</reference>
<reference key="2">
    <citation type="submission" date="2007-04" db="EMBL/GenBank/DDBJ databases">
        <title>Complete genome sequence of Burkholderia multivorans ATCC 17616.</title>
        <authorList>
            <person name="Ohtsubo Y."/>
            <person name="Yamashita A."/>
            <person name="Kurokawa K."/>
            <person name="Takami H."/>
            <person name="Yuhara S."/>
            <person name="Nishiyama E."/>
            <person name="Endo R."/>
            <person name="Miyazaki R."/>
            <person name="Ono A."/>
            <person name="Yano K."/>
            <person name="Ito M."/>
            <person name="Sota M."/>
            <person name="Yuji N."/>
            <person name="Hattori M."/>
            <person name="Tsuda M."/>
        </authorList>
    </citation>
    <scope>NUCLEOTIDE SEQUENCE [LARGE SCALE GENOMIC DNA]</scope>
    <source>
        <strain>ATCC 17616 / 249</strain>
    </source>
</reference>
<keyword id="KW-0997">Cell inner membrane</keyword>
<keyword id="KW-1003">Cell membrane</keyword>
<keyword id="KW-0143">Chaperone</keyword>
<keyword id="KW-0472">Membrane</keyword>
<keyword id="KW-0653">Protein transport</keyword>
<keyword id="KW-1185">Reference proteome</keyword>
<keyword id="KW-0812">Transmembrane</keyword>
<keyword id="KW-1133">Transmembrane helix</keyword>
<keyword id="KW-0813">Transport</keyword>
<evidence type="ECO:0000255" key="1">
    <source>
        <dbReference type="HAMAP-Rule" id="MF_01810"/>
    </source>
</evidence>
<sequence>MDIKRTVLWVIFFMSAVMLYDNWQRSHGRPSMFFPSATQTAPAAAGGASGAGATTTAGNVPAPAAGTAPATTAPAAQAQLVKFSTDVYDGEIDTRGGTLAKLTLKKQGDGKQPDLYITLFDHTAGHTYLARTGLLGGDFPNHNDVYTQVNAGPTSLSGDQNTLKLSFESPVKGGVKVVKTYTFTRGSYVIGVDTKIDNVGTTPVTPTLYMELVRDNTAVETPMFSHTFLGPAVYTDAKHFQKINFSDLDKNKADYVTSADNGWVAMVQHYFASAWIPQHGVKRDIYAEKIDPSLYRVGVKQPVAAIAPGQSADVQARLFAGPEEERMLEGIAPGLELVKDYGWVTIIAKPLFWLLEKIHSYVGNWGWAIVLLTLLIKAVFFPLSAASYKSMARMKEITPRMQALRERFKNDPQKMNAALMELYKTEKVNPFGGCLPVVIQIPVFISLYWVLLASVEMRGAPWILWIHDLSQRDPYFILPVLMAVSMYVQTSLNPTPPDPVQAKMMKFMPIAFSVMFFFFPAGLVLYYVVNNVLSIAQQYYITRKLGGVKKKPA</sequence>
<proteinExistence type="inferred from homology"/>
<protein>
    <recommendedName>
        <fullName evidence="1">Membrane protein insertase YidC</fullName>
    </recommendedName>
    <alternativeName>
        <fullName evidence="1">Foldase YidC</fullName>
    </alternativeName>
    <alternativeName>
        <fullName evidence="1">Membrane integrase YidC</fullName>
    </alternativeName>
    <alternativeName>
        <fullName evidence="1">Membrane protein YidC</fullName>
    </alternativeName>
</protein>